<comment type="subcellular location">
    <subcellularLocation>
        <location evidence="2">Membrane</location>
        <topology evidence="2">Multi-pass membrane protein</topology>
    </subcellularLocation>
</comment>
<comment type="similarity">
    <text evidence="2">Belongs to the nematode receptor-like protein srb family.</text>
</comment>
<feature type="chain" id="PRO_0000104506" description="Serpentine receptor class beta-17">
    <location>
        <begin position="1"/>
        <end position="363"/>
    </location>
</feature>
<feature type="transmembrane region" description="Helical" evidence="1">
    <location>
        <begin position="46"/>
        <end position="66"/>
    </location>
</feature>
<feature type="transmembrane region" description="Helical" evidence="1">
    <location>
        <begin position="75"/>
        <end position="95"/>
    </location>
</feature>
<feature type="transmembrane region" description="Helical" evidence="1">
    <location>
        <begin position="120"/>
        <end position="140"/>
    </location>
</feature>
<feature type="transmembrane region" description="Helical" evidence="1">
    <location>
        <begin position="169"/>
        <end position="189"/>
    </location>
</feature>
<feature type="transmembrane region" description="Helical" evidence="1">
    <location>
        <begin position="214"/>
        <end position="234"/>
    </location>
</feature>
<feature type="transmembrane region" description="Helical" evidence="1">
    <location>
        <begin position="273"/>
        <end position="293"/>
    </location>
</feature>
<feature type="transmembrane region" description="Helical" evidence="1">
    <location>
        <begin position="304"/>
        <end position="324"/>
    </location>
</feature>
<evidence type="ECO:0000255" key="1"/>
<evidence type="ECO:0000305" key="2"/>
<dbReference type="EMBL" id="Z81054">
    <property type="protein sequence ID" value="CAB02886.4"/>
    <property type="molecule type" value="Genomic_DNA"/>
</dbReference>
<dbReference type="PIR" id="T20459">
    <property type="entry name" value="T20459"/>
</dbReference>
<dbReference type="RefSeq" id="NP_501930.4">
    <property type="nucleotide sequence ID" value="NM_069529.5"/>
</dbReference>
<dbReference type="FunCoup" id="O02241">
    <property type="interactions" value="1"/>
</dbReference>
<dbReference type="PaxDb" id="6239-F01D4.7"/>
<dbReference type="EnsemblMetazoa" id="F01D4.7.1">
    <property type="protein sequence ID" value="F01D4.7.1"/>
    <property type="gene ID" value="WBGene00008489"/>
</dbReference>
<dbReference type="GeneID" id="184054"/>
<dbReference type="KEGG" id="cel:CELE_F01D4.7"/>
<dbReference type="UCSC" id="F01D4.7">
    <property type="organism name" value="c. elegans"/>
</dbReference>
<dbReference type="AGR" id="WB:WBGene00008489"/>
<dbReference type="CTD" id="184054"/>
<dbReference type="WormBase" id="F01D4.7">
    <property type="protein sequence ID" value="CE44452"/>
    <property type="gene ID" value="WBGene00008489"/>
    <property type="gene designation" value="srb-17"/>
</dbReference>
<dbReference type="eggNOG" id="ENOG502TGGY">
    <property type="taxonomic scope" value="Eukaryota"/>
</dbReference>
<dbReference type="GeneTree" id="ENSGT00970000195867"/>
<dbReference type="HOGENOM" id="CLU_065027_0_0_1"/>
<dbReference type="InParanoid" id="O02241"/>
<dbReference type="OMA" id="RFQMNEN"/>
<dbReference type="OrthoDB" id="5836746at2759"/>
<dbReference type="PhylomeDB" id="O02241"/>
<dbReference type="PRO" id="PR:O02241"/>
<dbReference type="Proteomes" id="UP000001940">
    <property type="component" value="Chromosome IV"/>
</dbReference>
<dbReference type="Bgee" id="WBGene00008489">
    <property type="expression patterns" value="Expressed in multicellular organism and 2 other cell types or tissues"/>
</dbReference>
<dbReference type="GO" id="GO:0016020">
    <property type="term" value="C:membrane"/>
    <property type="evidence" value="ECO:0007669"/>
    <property type="project" value="UniProtKB-SubCell"/>
</dbReference>
<dbReference type="GO" id="GO:0004888">
    <property type="term" value="F:transmembrane signaling receptor activity"/>
    <property type="evidence" value="ECO:0007669"/>
    <property type="project" value="InterPro"/>
</dbReference>
<dbReference type="GO" id="GO:0007606">
    <property type="term" value="P:sensory perception of chemical stimulus"/>
    <property type="evidence" value="ECO:0007669"/>
    <property type="project" value="InterPro"/>
</dbReference>
<dbReference type="InterPro" id="IPR019408">
    <property type="entry name" value="7TM_GPCR_serpentine_rcpt_Srab"/>
</dbReference>
<dbReference type="InterPro" id="IPR002184">
    <property type="entry name" value="7TM_GPCR_serpentine_rcpt_Srb"/>
</dbReference>
<dbReference type="PANTHER" id="PTHR31216">
    <property type="entry name" value="SERPENTINE RECEPTOR CLASS BETA-1-RELATED-RELATED"/>
    <property type="match status" value="1"/>
</dbReference>
<dbReference type="PANTHER" id="PTHR31216:SF11">
    <property type="entry name" value="SERPENTINE RECEPTOR CLASS BETA-16-RELATED"/>
    <property type="match status" value="1"/>
</dbReference>
<dbReference type="Pfam" id="PF10292">
    <property type="entry name" value="7TM_GPCR_Srab"/>
    <property type="match status" value="1"/>
</dbReference>
<dbReference type="PRINTS" id="PR00699">
    <property type="entry name" value="TMPROTEINSRB"/>
</dbReference>
<name>SRB17_CAEEL</name>
<accession>O02241</accession>
<organism>
    <name type="scientific">Caenorhabditis elegans</name>
    <dbReference type="NCBI Taxonomy" id="6239"/>
    <lineage>
        <taxon>Eukaryota</taxon>
        <taxon>Metazoa</taxon>
        <taxon>Ecdysozoa</taxon>
        <taxon>Nematoda</taxon>
        <taxon>Chromadorea</taxon>
        <taxon>Rhabditida</taxon>
        <taxon>Rhabditina</taxon>
        <taxon>Rhabditomorpha</taxon>
        <taxon>Rhabditoidea</taxon>
        <taxon>Rhabditidae</taxon>
        <taxon>Peloderinae</taxon>
        <taxon>Caenorhabditis</taxon>
    </lineage>
</organism>
<proteinExistence type="inferred from homology"/>
<reference key="1">
    <citation type="journal article" date="1998" name="Science">
        <title>Genome sequence of the nematode C. elegans: a platform for investigating biology.</title>
        <authorList>
            <consortium name="The C. elegans sequencing consortium"/>
        </authorList>
    </citation>
    <scope>NUCLEOTIDE SEQUENCE [LARGE SCALE GENOMIC DNA]</scope>
    <source>
        <strain>Bristol N2</strain>
    </source>
</reference>
<protein>
    <recommendedName>
        <fullName>Serpentine receptor class beta-17</fullName>
        <shortName>Protein srb-17</shortName>
    </recommendedName>
</protein>
<gene>
    <name type="primary">srb-17</name>
    <name type="ORF">F01D4.7</name>
</gene>
<sequence>MPKTKLASSVELSFEEPELFVHMYDFAVEITDEFCQIAFPGAFHPAFLLVKLYHILLSVISMGSIIYFFLNYSNLLAFHFNIKILFFFQFCSCFLQSATLAISQTHHLVLALIANGPCDVILAPALFALFNLPLIFSMLCMEFSQVLMVIERTLASCLFVCYEKTTKTIGFVLTSFAVIVPGLTCLYMYYDDKFNYPQMSAMATSPSSKLRINYIFITINVLNVLTLMHSIGLYRHNKQKINMVKGRDHFILSSRFQMNENVSSSKLLWRLSCAQLIIFLLYGCAMYSLRIFLPGERSAVWQAVTEFCYTPPLYCAIMPLICIVCAQNSLKQRNSKVQSLITLRSVGQEGWDNYQGMLQKQWE</sequence>
<keyword id="KW-0472">Membrane</keyword>
<keyword id="KW-1185">Reference proteome</keyword>
<keyword id="KW-0812">Transmembrane</keyword>
<keyword id="KW-1133">Transmembrane helix</keyword>